<evidence type="ECO:0000255" key="1">
    <source>
        <dbReference type="HAMAP-Rule" id="MF_00153"/>
    </source>
</evidence>
<organism>
    <name type="scientific">Sulfolobus acidocaldarius (strain ATCC 33909 / DSM 639 / JCM 8929 / NBRC 15157 / NCIMB 11770)</name>
    <dbReference type="NCBI Taxonomy" id="330779"/>
    <lineage>
        <taxon>Archaea</taxon>
        <taxon>Thermoproteota</taxon>
        <taxon>Thermoprotei</taxon>
        <taxon>Sulfolobales</taxon>
        <taxon>Sulfolobaceae</taxon>
        <taxon>Sulfolobus</taxon>
    </lineage>
</organism>
<accession>Q4J978</accession>
<proteinExistence type="inferred from homology"/>
<name>DHYS_SULAC</name>
<reference key="1">
    <citation type="journal article" date="2005" name="J. Bacteriol.">
        <title>The genome of Sulfolobus acidocaldarius, a model organism of the Crenarchaeota.</title>
        <authorList>
            <person name="Chen L."/>
            <person name="Bruegger K."/>
            <person name="Skovgaard M."/>
            <person name="Redder P."/>
            <person name="She Q."/>
            <person name="Torarinsson E."/>
            <person name="Greve B."/>
            <person name="Awayez M."/>
            <person name="Zibat A."/>
            <person name="Klenk H.-P."/>
            <person name="Garrett R.A."/>
        </authorList>
    </citation>
    <scope>NUCLEOTIDE SEQUENCE [LARGE SCALE GENOMIC DNA]</scope>
    <source>
        <strain>ATCC 33909 / DSM 639 / JCM 8929 / NBRC 15157 / NCIMB 11770</strain>
    </source>
</reference>
<comment type="function">
    <text evidence="1">Catalyzes the NAD-dependent oxidative cleavage of spermidine and the subsequent transfer of the butylamine moiety of spermidine to the epsilon-amino group of a specific lysine residue of the eIF-5A precursor protein to form the intermediate deoxyhypusine residue.</text>
</comment>
<comment type="catalytic activity">
    <reaction evidence="1">
        <text>[eIF5A protein]-L-lysine + spermidine = [eIF5A protein]-deoxyhypusine + propane-1,3-diamine</text>
        <dbReference type="Rhea" id="RHEA:33299"/>
        <dbReference type="Rhea" id="RHEA-COMP:10143"/>
        <dbReference type="Rhea" id="RHEA-COMP:10144"/>
        <dbReference type="ChEBI" id="CHEBI:29969"/>
        <dbReference type="ChEBI" id="CHEBI:57484"/>
        <dbReference type="ChEBI" id="CHEBI:57834"/>
        <dbReference type="ChEBI" id="CHEBI:82657"/>
        <dbReference type="EC" id="2.5.1.46"/>
    </reaction>
</comment>
<comment type="cofactor">
    <cofactor evidence="1">
        <name>NAD(+)</name>
        <dbReference type="ChEBI" id="CHEBI:57540"/>
    </cofactor>
</comment>
<comment type="pathway">
    <text evidence="1">Protein modification; eIF5A hypusination.</text>
</comment>
<comment type="similarity">
    <text evidence="1">Belongs to the deoxyhypusine synthase family.</text>
</comment>
<keyword id="KW-0386">Hypusine biosynthesis</keyword>
<keyword id="KW-0520">NAD</keyword>
<keyword id="KW-1185">Reference proteome</keyword>
<keyword id="KW-0808">Transferase</keyword>
<feature type="chain" id="PRO_0000134507" description="Probable deoxyhypusine synthase">
    <location>
        <begin position="1"/>
        <end position="311"/>
    </location>
</feature>
<feature type="active site" description="Nucleophile" evidence="1">
    <location>
        <position position="284"/>
    </location>
</feature>
<sequence>MKREDLLTNVVDDLSLEDLRDLKNLEIIFDKVYGFSAENVVKAVEILRDLIKEADLRFLSFTANLVSTGLRGLLADLIRREYFNVVITTGGTIDHDIARSFGGKYYKGSFEFDDTMLKELEIHRLGNIFIPFENYGKVIEEVVRKYIPEIVSVRKDWSVYELLWEFGKRINDQHSILKACYEKKVPLIVPGVVDGSFGTNLFIVSQFNGLKIDLFQDMRLIKDLIFSSEKSGALIIGGGISKHHTIWWNQFKDGLDYAIYITTAQEYDGSLSGARPREAISWNKVRPSARSVTIYADATIILPILSASLLR</sequence>
<protein>
    <recommendedName>
        <fullName evidence="1">Probable deoxyhypusine synthase</fullName>
        <shortName evidence="1">DHS</shortName>
        <ecNumber evidence="1">2.5.1.46</ecNumber>
    </recommendedName>
</protein>
<gene>
    <name evidence="1" type="primary">dys</name>
    <name type="ordered locus">Saci_1316</name>
</gene>
<dbReference type="EC" id="2.5.1.46" evidence="1"/>
<dbReference type="EMBL" id="CP000077">
    <property type="protein sequence ID" value="AAY80652.1"/>
    <property type="molecule type" value="Genomic_DNA"/>
</dbReference>
<dbReference type="RefSeq" id="WP_011278154.1">
    <property type="nucleotide sequence ID" value="NC_007181.1"/>
</dbReference>
<dbReference type="SMR" id="Q4J978"/>
<dbReference type="STRING" id="330779.Saci_1316"/>
<dbReference type="GeneID" id="14551819"/>
<dbReference type="KEGG" id="sai:Saci_1316"/>
<dbReference type="PATRIC" id="fig|330779.12.peg.1269"/>
<dbReference type="eggNOG" id="arCOG04142">
    <property type="taxonomic scope" value="Archaea"/>
</dbReference>
<dbReference type="HOGENOM" id="CLU_039781_1_0_2"/>
<dbReference type="UniPathway" id="UPA00354"/>
<dbReference type="Proteomes" id="UP000001018">
    <property type="component" value="Chromosome"/>
</dbReference>
<dbReference type="GO" id="GO:0005737">
    <property type="term" value="C:cytoplasm"/>
    <property type="evidence" value="ECO:0007669"/>
    <property type="project" value="TreeGrafter"/>
</dbReference>
<dbReference type="GO" id="GO:0034038">
    <property type="term" value="F:deoxyhypusine synthase activity"/>
    <property type="evidence" value="ECO:0007669"/>
    <property type="project" value="UniProtKB-UniRule"/>
</dbReference>
<dbReference type="FunFam" id="3.40.910.10:FF:000007">
    <property type="entry name" value="Probable deoxyhypusine synthase"/>
    <property type="match status" value="1"/>
</dbReference>
<dbReference type="Gene3D" id="3.40.910.10">
    <property type="entry name" value="Deoxyhypusine synthase"/>
    <property type="match status" value="1"/>
</dbReference>
<dbReference type="HAMAP" id="MF_00153">
    <property type="entry name" value="DHS"/>
    <property type="match status" value="1"/>
</dbReference>
<dbReference type="InterPro" id="IPR022899">
    <property type="entry name" value="Deoxyhypus_synthase_arc"/>
</dbReference>
<dbReference type="InterPro" id="IPR002773">
    <property type="entry name" value="Deoxyhypusine_synthase"/>
</dbReference>
<dbReference type="InterPro" id="IPR036982">
    <property type="entry name" value="Deoxyhypusine_synthase_sf"/>
</dbReference>
<dbReference type="InterPro" id="IPR029035">
    <property type="entry name" value="DHS-like_NAD/FAD-binding_dom"/>
</dbReference>
<dbReference type="NCBIfam" id="NF002294">
    <property type="entry name" value="PRK01221.1"/>
    <property type="match status" value="1"/>
</dbReference>
<dbReference type="PANTHER" id="PTHR11703">
    <property type="entry name" value="DEOXYHYPUSINE SYNTHASE"/>
    <property type="match status" value="1"/>
</dbReference>
<dbReference type="PANTHER" id="PTHR11703:SF0">
    <property type="entry name" value="DEOXYHYPUSINE SYNTHASE"/>
    <property type="match status" value="1"/>
</dbReference>
<dbReference type="Pfam" id="PF01916">
    <property type="entry name" value="DS"/>
    <property type="match status" value="1"/>
</dbReference>
<dbReference type="SUPFAM" id="SSF52467">
    <property type="entry name" value="DHS-like NAD/FAD-binding domain"/>
    <property type="match status" value="1"/>
</dbReference>